<proteinExistence type="inferred from homology"/>
<dbReference type="EC" id="6.1.1.7" evidence="1"/>
<dbReference type="EMBL" id="BX548175">
    <property type="protein sequence ID" value="CAE22331.1"/>
    <property type="molecule type" value="Genomic_DNA"/>
</dbReference>
<dbReference type="RefSeq" id="WP_011131521.1">
    <property type="nucleotide sequence ID" value="NC_005071.1"/>
</dbReference>
<dbReference type="SMR" id="Q7V419"/>
<dbReference type="KEGG" id="pmt:PMT_2157"/>
<dbReference type="eggNOG" id="COG0013">
    <property type="taxonomic scope" value="Bacteria"/>
</dbReference>
<dbReference type="HOGENOM" id="CLU_004485_1_0_3"/>
<dbReference type="OrthoDB" id="9803884at2"/>
<dbReference type="Proteomes" id="UP000001423">
    <property type="component" value="Chromosome"/>
</dbReference>
<dbReference type="GO" id="GO:0005829">
    <property type="term" value="C:cytosol"/>
    <property type="evidence" value="ECO:0007669"/>
    <property type="project" value="TreeGrafter"/>
</dbReference>
<dbReference type="GO" id="GO:0004813">
    <property type="term" value="F:alanine-tRNA ligase activity"/>
    <property type="evidence" value="ECO:0007669"/>
    <property type="project" value="UniProtKB-UniRule"/>
</dbReference>
<dbReference type="GO" id="GO:0002161">
    <property type="term" value="F:aminoacyl-tRNA deacylase activity"/>
    <property type="evidence" value="ECO:0007669"/>
    <property type="project" value="TreeGrafter"/>
</dbReference>
<dbReference type="GO" id="GO:0005524">
    <property type="term" value="F:ATP binding"/>
    <property type="evidence" value="ECO:0007669"/>
    <property type="project" value="UniProtKB-UniRule"/>
</dbReference>
<dbReference type="GO" id="GO:0000049">
    <property type="term" value="F:tRNA binding"/>
    <property type="evidence" value="ECO:0007669"/>
    <property type="project" value="UniProtKB-KW"/>
</dbReference>
<dbReference type="GO" id="GO:0008270">
    <property type="term" value="F:zinc ion binding"/>
    <property type="evidence" value="ECO:0007669"/>
    <property type="project" value="UniProtKB-UniRule"/>
</dbReference>
<dbReference type="GO" id="GO:0006419">
    <property type="term" value="P:alanyl-tRNA aminoacylation"/>
    <property type="evidence" value="ECO:0007669"/>
    <property type="project" value="UniProtKB-UniRule"/>
</dbReference>
<dbReference type="CDD" id="cd00673">
    <property type="entry name" value="AlaRS_core"/>
    <property type="match status" value="1"/>
</dbReference>
<dbReference type="FunFam" id="2.40.30.130:FF:000001">
    <property type="entry name" value="Alanine--tRNA ligase"/>
    <property type="match status" value="1"/>
</dbReference>
<dbReference type="FunFam" id="3.10.310.40:FF:000001">
    <property type="entry name" value="Alanine--tRNA ligase"/>
    <property type="match status" value="1"/>
</dbReference>
<dbReference type="FunFam" id="3.30.54.20:FF:000001">
    <property type="entry name" value="Alanine--tRNA ligase"/>
    <property type="match status" value="1"/>
</dbReference>
<dbReference type="FunFam" id="3.30.930.10:FF:000004">
    <property type="entry name" value="Alanine--tRNA ligase"/>
    <property type="match status" value="1"/>
</dbReference>
<dbReference type="FunFam" id="3.30.980.10:FF:000004">
    <property type="entry name" value="Alanine--tRNA ligase, cytoplasmic"/>
    <property type="match status" value="1"/>
</dbReference>
<dbReference type="Gene3D" id="2.40.30.130">
    <property type="match status" value="1"/>
</dbReference>
<dbReference type="Gene3D" id="3.10.310.40">
    <property type="match status" value="1"/>
</dbReference>
<dbReference type="Gene3D" id="3.30.54.20">
    <property type="match status" value="1"/>
</dbReference>
<dbReference type="Gene3D" id="6.10.250.550">
    <property type="match status" value="1"/>
</dbReference>
<dbReference type="Gene3D" id="3.30.930.10">
    <property type="entry name" value="Bira Bifunctional Protein, Domain 2"/>
    <property type="match status" value="1"/>
</dbReference>
<dbReference type="Gene3D" id="3.30.980.10">
    <property type="entry name" value="Threonyl-trna Synthetase, Chain A, domain 2"/>
    <property type="match status" value="1"/>
</dbReference>
<dbReference type="HAMAP" id="MF_00036_B">
    <property type="entry name" value="Ala_tRNA_synth_B"/>
    <property type="match status" value="1"/>
</dbReference>
<dbReference type="InterPro" id="IPR045864">
    <property type="entry name" value="aa-tRNA-synth_II/BPL/LPL"/>
</dbReference>
<dbReference type="InterPro" id="IPR002318">
    <property type="entry name" value="Ala-tRNA-lgiase_IIc"/>
</dbReference>
<dbReference type="InterPro" id="IPR018162">
    <property type="entry name" value="Ala-tRNA-ligase_IIc_anticod-bd"/>
</dbReference>
<dbReference type="InterPro" id="IPR018165">
    <property type="entry name" value="Ala-tRNA-synth_IIc_core"/>
</dbReference>
<dbReference type="InterPro" id="IPR018164">
    <property type="entry name" value="Ala-tRNA-synth_IIc_N"/>
</dbReference>
<dbReference type="InterPro" id="IPR050058">
    <property type="entry name" value="Ala-tRNA_ligase"/>
</dbReference>
<dbReference type="InterPro" id="IPR023033">
    <property type="entry name" value="Ala_tRNA_ligase_euk/bac"/>
</dbReference>
<dbReference type="InterPro" id="IPR003156">
    <property type="entry name" value="DHHA1_dom"/>
</dbReference>
<dbReference type="InterPro" id="IPR018163">
    <property type="entry name" value="Thr/Ala-tRNA-synth_IIc_edit"/>
</dbReference>
<dbReference type="InterPro" id="IPR009000">
    <property type="entry name" value="Transl_B-barrel_sf"/>
</dbReference>
<dbReference type="InterPro" id="IPR012947">
    <property type="entry name" value="tRNA_SAD"/>
</dbReference>
<dbReference type="NCBIfam" id="TIGR00344">
    <property type="entry name" value="alaS"/>
    <property type="match status" value="1"/>
</dbReference>
<dbReference type="PANTHER" id="PTHR11777:SF9">
    <property type="entry name" value="ALANINE--TRNA LIGASE, CYTOPLASMIC"/>
    <property type="match status" value="1"/>
</dbReference>
<dbReference type="PANTHER" id="PTHR11777">
    <property type="entry name" value="ALANYL-TRNA SYNTHETASE"/>
    <property type="match status" value="1"/>
</dbReference>
<dbReference type="Pfam" id="PF02272">
    <property type="entry name" value="DHHA1"/>
    <property type="match status" value="1"/>
</dbReference>
<dbReference type="Pfam" id="PF01411">
    <property type="entry name" value="tRNA-synt_2c"/>
    <property type="match status" value="1"/>
</dbReference>
<dbReference type="Pfam" id="PF07973">
    <property type="entry name" value="tRNA_SAD"/>
    <property type="match status" value="1"/>
</dbReference>
<dbReference type="PRINTS" id="PR00980">
    <property type="entry name" value="TRNASYNTHALA"/>
</dbReference>
<dbReference type="SMART" id="SM00863">
    <property type="entry name" value="tRNA_SAD"/>
    <property type="match status" value="1"/>
</dbReference>
<dbReference type="SUPFAM" id="SSF55681">
    <property type="entry name" value="Class II aaRS and biotin synthetases"/>
    <property type="match status" value="1"/>
</dbReference>
<dbReference type="SUPFAM" id="SSF101353">
    <property type="entry name" value="Putative anticodon-binding domain of alanyl-tRNA synthetase (AlaRS)"/>
    <property type="match status" value="1"/>
</dbReference>
<dbReference type="SUPFAM" id="SSF55186">
    <property type="entry name" value="ThrRS/AlaRS common domain"/>
    <property type="match status" value="1"/>
</dbReference>
<dbReference type="SUPFAM" id="SSF50447">
    <property type="entry name" value="Translation proteins"/>
    <property type="match status" value="1"/>
</dbReference>
<dbReference type="PROSITE" id="PS50860">
    <property type="entry name" value="AA_TRNA_LIGASE_II_ALA"/>
    <property type="match status" value="1"/>
</dbReference>
<reference key="1">
    <citation type="journal article" date="2003" name="Nature">
        <title>Genome divergence in two Prochlorococcus ecotypes reflects oceanic niche differentiation.</title>
        <authorList>
            <person name="Rocap G."/>
            <person name="Larimer F.W."/>
            <person name="Lamerdin J.E."/>
            <person name="Malfatti S."/>
            <person name="Chain P."/>
            <person name="Ahlgren N.A."/>
            <person name="Arellano A."/>
            <person name="Coleman M."/>
            <person name="Hauser L."/>
            <person name="Hess W.R."/>
            <person name="Johnson Z.I."/>
            <person name="Land M.L."/>
            <person name="Lindell D."/>
            <person name="Post A.F."/>
            <person name="Regala W."/>
            <person name="Shah M."/>
            <person name="Shaw S.L."/>
            <person name="Steglich C."/>
            <person name="Sullivan M.B."/>
            <person name="Ting C.S."/>
            <person name="Tolonen A."/>
            <person name="Webb E.A."/>
            <person name="Zinser E.R."/>
            <person name="Chisholm S.W."/>
        </authorList>
    </citation>
    <scope>NUCLEOTIDE SEQUENCE [LARGE SCALE GENOMIC DNA]</scope>
    <source>
        <strain>MIT 9313</strain>
    </source>
</reference>
<evidence type="ECO:0000255" key="1">
    <source>
        <dbReference type="HAMAP-Rule" id="MF_00036"/>
    </source>
</evidence>
<gene>
    <name evidence="1" type="primary">alaS</name>
    <name type="ordered locus">PMT_2157</name>
</gene>
<protein>
    <recommendedName>
        <fullName evidence="1">Alanine--tRNA ligase</fullName>
        <ecNumber evidence="1">6.1.1.7</ecNumber>
    </recommendedName>
    <alternativeName>
        <fullName evidence="1">Alanyl-tRNA synthetase</fullName>
        <shortName evidence="1">AlaRS</shortName>
    </alternativeName>
</protein>
<comment type="function">
    <text evidence="1">Catalyzes the attachment of alanine to tRNA(Ala) in a two-step reaction: alanine is first activated by ATP to form Ala-AMP and then transferred to the acceptor end of tRNA(Ala). Also edits incorrectly charged Ser-tRNA(Ala) and Gly-tRNA(Ala) via its editing domain.</text>
</comment>
<comment type="catalytic activity">
    <reaction evidence="1">
        <text>tRNA(Ala) + L-alanine + ATP = L-alanyl-tRNA(Ala) + AMP + diphosphate</text>
        <dbReference type="Rhea" id="RHEA:12540"/>
        <dbReference type="Rhea" id="RHEA-COMP:9657"/>
        <dbReference type="Rhea" id="RHEA-COMP:9923"/>
        <dbReference type="ChEBI" id="CHEBI:30616"/>
        <dbReference type="ChEBI" id="CHEBI:33019"/>
        <dbReference type="ChEBI" id="CHEBI:57972"/>
        <dbReference type="ChEBI" id="CHEBI:78442"/>
        <dbReference type="ChEBI" id="CHEBI:78497"/>
        <dbReference type="ChEBI" id="CHEBI:456215"/>
        <dbReference type="EC" id="6.1.1.7"/>
    </reaction>
</comment>
<comment type="cofactor">
    <cofactor evidence="1">
        <name>Zn(2+)</name>
        <dbReference type="ChEBI" id="CHEBI:29105"/>
    </cofactor>
    <text evidence="1">Binds 1 zinc ion per subunit.</text>
</comment>
<comment type="subcellular location">
    <subcellularLocation>
        <location evidence="1">Cytoplasm</location>
    </subcellularLocation>
</comment>
<comment type="domain">
    <text evidence="1">Consists of three domains; the N-terminal catalytic domain, the editing domain and the C-terminal C-Ala domain. The editing domain removes incorrectly charged amino acids, while the C-Ala domain, along with tRNA(Ala), serves as a bridge to cooperatively bring together the editing and aminoacylation centers thus stimulating deacylation of misacylated tRNAs.</text>
</comment>
<comment type="similarity">
    <text evidence="1">Belongs to the class-II aminoacyl-tRNA synthetase family.</text>
</comment>
<organism>
    <name type="scientific">Prochlorococcus marinus (strain MIT 9313)</name>
    <dbReference type="NCBI Taxonomy" id="74547"/>
    <lineage>
        <taxon>Bacteria</taxon>
        <taxon>Bacillati</taxon>
        <taxon>Cyanobacteriota</taxon>
        <taxon>Cyanophyceae</taxon>
        <taxon>Synechococcales</taxon>
        <taxon>Prochlorococcaceae</taxon>
        <taxon>Prochlorococcus</taxon>
    </lineage>
</organism>
<accession>Q7V419</accession>
<sequence length="892" mass="96492">MAVARSLRSGDSRPRTGSEIRTAFLTFFAERAHQVIPSASLVPEDPTVLLTIAGMLPFKPVFMGQAERPAPRATSSQKCIRTNDIENVGRTARHHTFFEMLGNFSFGDYFKQQAIEWAWELTTEVFGLDPKNLVVSVFREDDEAETIWRDVVGVNPKRIMRMDEADNFWASGPTGPCGPCSEIYYDFKPDLGNDDIDLEDDGRFVEFYNLVFMQYNRDGEGNLTPLANRNIDTGMGLERMAQILQGVPNNYETDIIYPLIETAAGLAGLDYQKLDEKGKTSFKVIGDHCRAITHLICDGVTASNLGRGYIMRRLLRRVVRHGRLVGIEKPFLQAMGEAAIALMVEAYPQLEERRKLILAELNREEARFLETLERGEKVLADVLVANPQMISGGQAFELYDTYGFPLELTQEIAEEHGLTVDLQGFEQAMDQQRQRAKAAAVSIDLTLQGAIEQMAAELEATRFQGYEVLEQPCCVLALVVNGESAERASAGDSVQIVLDTTPFYGESGGQVGDHGVLSGEGSGGNGVIVTVDDVSRHRNVFVHFGRIERGTLALGDLVNAQVDRACRRRAQANHTATHLLQAALKQVVDSGIGQAGSLVDFDRLRFDFHCARAVTAKELEQIEALINGWIMESHDLIVEEMSIQEAKAAGAVAMFGEKYADVVRVVDVPGVSMELCGGTHVANTAEIGLFKIVAESSVAAGIRRIEAVAGPAVLAYLNERDEVVKKLLERLKVQPSEIVERVTSLQEELKSSQKALTAARAELAVAKSAALATQAVAVGEYQLLVARLDGVEGAGLQNAAQGLLDQLGDGAAVVLGGLPDPSDEGKVILVAAFGKQLIAQGQQAGKFIGSIAKRCGGGGGGRPNLAQAGGRDGAALDGALEAAKVDLQQALG</sequence>
<keyword id="KW-0030">Aminoacyl-tRNA synthetase</keyword>
<keyword id="KW-0067">ATP-binding</keyword>
<keyword id="KW-0963">Cytoplasm</keyword>
<keyword id="KW-0436">Ligase</keyword>
<keyword id="KW-0479">Metal-binding</keyword>
<keyword id="KW-0547">Nucleotide-binding</keyword>
<keyword id="KW-0648">Protein biosynthesis</keyword>
<keyword id="KW-1185">Reference proteome</keyword>
<keyword id="KW-0694">RNA-binding</keyword>
<keyword id="KW-0820">tRNA-binding</keyword>
<keyword id="KW-0862">Zinc</keyword>
<feature type="chain" id="PRO_0000075173" description="Alanine--tRNA ligase">
    <location>
        <begin position="1"/>
        <end position="892"/>
    </location>
</feature>
<feature type="binding site" evidence="1">
    <location>
        <position position="574"/>
    </location>
    <ligand>
        <name>Zn(2+)</name>
        <dbReference type="ChEBI" id="CHEBI:29105"/>
    </ligand>
</feature>
<feature type="binding site" evidence="1">
    <location>
        <position position="578"/>
    </location>
    <ligand>
        <name>Zn(2+)</name>
        <dbReference type="ChEBI" id="CHEBI:29105"/>
    </ligand>
</feature>
<feature type="binding site" evidence="1">
    <location>
        <position position="676"/>
    </location>
    <ligand>
        <name>Zn(2+)</name>
        <dbReference type="ChEBI" id="CHEBI:29105"/>
    </ligand>
</feature>
<feature type="binding site" evidence="1">
    <location>
        <position position="680"/>
    </location>
    <ligand>
        <name>Zn(2+)</name>
        <dbReference type="ChEBI" id="CHEBI:29105"/>
    </ligand>
</feature>
<name>SYA_PROMM</name>